<gene>
    <name evidence="1" type="primary">ihfB</name>
    <name evidence="1" type="synonym">himD</name>
    <name type="ordered locus">Smlt2044</name>
</gene>
<dbReference type="EMBL" id="AM743169">
    <property type="protein sequence ID" value="CAQ45552.1"/>
    <property type="molecule type" value="Genomic_DNA"/>
</dbReference>
<dbReference type="RefSeq" id="WP_005409286.1">
    <property type="nucleotide sequence ID" value="NC_010943.1"/>
</dbReference>
<dbReference type="SMR" id="B2FNP6"/>
<dbReference type="EnsemblBacteria" id="CAQ45552">
    <property type="protein sequence ID" value="CAQ45552"/>
    <property type="gene ID" value="Smlt2044"/>
</dbReference>
<dbReference type="KEGG" id="sml:Smlt2044"/>
<dbReference type="eggNOG" id="COG0776">
    <property type="taxonomic scope" value="Bacteria"/>
</dbReference>
<dbReference type="HOGENOM" id="CLU_105066_2_0_6"/>
<dbReference type="Proteomes" id="UP000008840">
    <property type="component" value="Chromosome"/>
</dbReference>
<dbReference type="GO" id="GO:0005694">
    <property type="term" value="C:chromosome"/>
    <property type="evidence" value="ECO:0007669"/>
    <property type="project" value="InterPro"/>
</dbReference>
<dbReference type="GO" id="GO:0005829">
    <property type="term" value="C:cytosol"/>
    <property type="evidence" value="ECO:0007669"/>
    <property type="project" value="TreeGrafter"/>
</dbReference>
<dbReference type="GO" id="GO:0003677">
    <property type="term" value="F:DNA binding"/>
    <property type="evidence" value="ECO:0007669"/>
    <property type="project" value="UniProtKB-UniRule"/>
</dbReference>
<dbReference type="GO" id="GO:0030527">
    <property type="term" value="F:structural constituent of chromatin"/>
    <property type="evidence" value="ECO:0007669"/>
    <property type="project" value="InterPro"/>
</dbReference>
<dbReference type="GO" id="GO:0006310">
    <property type="term" value="P:DNA recombination"/>
    <property type="evidence" value="ECO:0007669"/>
    <property type="project" value="UniProtKB-UniRule"/>
</dbReference>
<dbReference type="GO" id="GO:0006355">
    <property type="term" value="P:regulation of DNA-templated transcription"/>
    <property type="evidence" value="ECO:0007669"/>
    <property type="project" value="UniProtKB-UniRule"/>
</dbReference>
<dbReference type="GO" id="GO:0006417">
    <property type="term" value="P:regulation of translation"/>
    <property type="evidence" value="ECO:0007669"/>
    <property type="project" value="UniProtKB-UniRule"/>
</dbReference>
<dbReference type="CDD" id="cd13836">
    <property type="entry name" value="IHF_B"/>
    <property type="match status" value="1"/>
</dbReference>
<dbReference type="FunFam" id="4.10.520.10:FF:000003">
    <property type="entry name" value="Integration host factor subunit beta"/>
    <property type="match status" value="1"/>
</dbReference>
<dbReference type="Gene3D" id="4.10.520.10">
    <property type="entry name" value="IHF-like DNA-binding proteins"/>
    <property type="match status" value="1"/>
</dbReference>
<dbReference type="HAMAP" id="MF_00381">
    <property type="entry name" value="IHF_beta"/>
    <property type="match status" value="1"/>
</dbReference>
<dbReference type="InterPro" id="IPR000119">
    <property type="entry name" value="Hist_DNA-bd"/>
</dbReference>
<dbReference type="InterPro" id="IPR020816">
    <property type="entry name" value="Histone-like_DNA-bd_CS"/>
</dbReference>
<dbReference type="InterPro" id="IPR010992">
    <property type="entry name" value="IHF-like_DNA-bd_dom_sf"/>
</dbReference>
<dbReference type="InterPro" id="IPR005685">
    <property type="entry name" value="IHF_beta"/>
</dbReference>
<dbReference type="NCBIfam" id="TIGR00988">
    <property type="entry name" value="hip"/>
    <property type="match status" value="1"/>
</dbReference>
<dbReference type="NCBIfam" id="NF001222">
    <property type="entry name" value="PRK00199.1"/>
    <property type="match status" value="1"/>
</dbReference>
<dbReference type="PANTHER" id="PTHR33175">
    <property type="entry name" value="DNA-BINDING PROTEIN HU"/>
    <property type="match status" value="1"/>
</dbReference>
<dbReference type="PANTHER" id="PTHR33175:SF5">
    <property type="entry name" value="INTEGRATION HOST FACTOR SUBUNIT BETA"/>
    <property type="match status" value="1"/>
</dbReference>
<dbReference type="Pfam" id="PF00216">
    <property type="entry name" value="Bac_DNA_binding"/>
    <property type="match status" value="1"/>
</dbReference>
<dbReference type="PRINTS" id="PR01727">
    <property type="entry name" value="DNABINDINGHU"/>
</dbReference>
<dbReference type="SMART" id="SM00411">
    <property type="entry name" value="BHL"/>
    <property type="match status" value="1"/>
</dbReference>
<dbReference type="SUPFAM" id="SSF47729">
    <property type="entry name" value="IHF-like DNA-binding proteins"/>
    <property type="match status" value="1"/>
</dbReference>
<dbReference type="PROSITE" id="PS00045">
    <property type="entry name" value="HISTONE_LIKE"/>
    <property type="match status" value="1"/>
</dbReference>
<accession>B2FNP6</accession>
<feature type="chain" id="PRO_1000122246" description="Integration host factor subunit beta">
    <location>
        <begin position="1"/>
        <end position="101"/>
    </location>
</feature>
<feature type="region of interest" description="Disordered" evidence="2">
    <location>
        <begin position="62"/>
        <end position="84"/>
    </location>
</feature>
<organism>
    <name type="scientific">Stenotrophomonas maltophilia (strain K279a)</name>
    <dbReference type="NCBI Taxonomy" id="522373"/>
    <lineage>
        <taxon>Bacteria</taxon>
        <taxon>Pseudomonadati</taxon>
        <taxon>Pseudomonadota</taxon>
        <taxon>Gammaproteobacteria</taxon>
        <taxon>Lysobacterales</taxon>
        <taxon>Lysobacteraceae</taxon>
        <taxon>Stenotrophomonas</taxon>
        <taxon>Stenotrophomonas maltophilia group</taxon>
    </lineage>
</organism>
<sequence>MTKSELIEILARRQAHLKADDVDLAVKSLLEMMGGSLSAGDRIEIRGFGSFSLHYRPPRLGRNPKTGESVALPGKHVPHFKPGKELRERVSSVLPLDADPA</sequence>
<protein>
    <recommendedName>
        <fullName evidence="1">Integration host factor subunit beta</fullName>
        <shortName evidence="1">IHF-beta</shortName>
    </recommendedName>
</protein>
<comment type="function">
    <text evidence="1">This protein is one of the two subunits of integration host factor, a specific DNA-binding protein that functions in genetic recombination as well as in transcriptional and translational control.</text>
</comment>
<comment type="subunit">
    <text evidence="1">Heterodimer of an alpha and a beta chain.</text>
</comment>
<comment type="similarity">
    <text evidence="1">Belongs to the bacterial histone-like protein family.</text>
</comment>
<keyword id="KW-0233">DNA recombination</keyword>
<keyword id="KW-0238">DNA-binding</keyword>
<keyword id="KW-1185">Reference proteome</keyword>
<keyword id="KW-0804">Transcription</keyword>
<keyword id="KW-0805">Transcription regulation</keyword>
<keyword id="KW-0810">Translation regulation</keyword>
<proteinExistence type="inferred from homology"/>
<reference key="1">
    <citation type="journal article" date="2008" name="Genome Biol.">
        <title>The complete genome, comparative and functional analysis of Stenotrophomonas maltophilia reveals an organism heavily shielded by drug resistance determinants.</title>
        <authorList>
            <person name="Crossman L.C."/>
            <person name="Gould V.C."/>
            <person name="Dow J.M."/>
            <person name="Vernikos G.S."/>
            <person name="Okazaki A."/>
            <person name="Sebaihia M."/>
            <person name="Saunders D."/>
            <person name="Arrowsmith C."/>
            <person name="Carver T."/>
            <person name="Peters N."/>
            <person name="Adlem E."/>
            <person name="Kerhornou A."/>
            <person name="Lord A."/>
            <person name="Murphy L."/>
            <person name="Seeger K."/>
            <person name="Squares R."/>
            <person name="Rutter S."/>
            <person name="Quail M.A."/>
            <person name="Rajandream M.A."/>
            <person name="Harris D."/>
            <person name="Churcher C."/>
            <person name="Bentley S.D."/>
            <person name="Parkhill J."/>
            <person name="Thomson N.R."/>
            <person name="Avison M.B."/>
        </authorList>
    </citation>
    <scope>NUCLEOTIDE SEQUENCE [LARGE SCALE GENOMIC DNA]</scope>
    <source>
        <strain>K279a</strain>
    </source>
</reference>
<evidence type="ECO:0000255" key="1">
    <source>
        <dbReference type="HAMAP-Rule" id="MF_00381"/>
    </source>
</evidence>
<evidence type="ECO:0000256" key="2">
    <source>
        <dbReference type="SAM" id="MobiDB-lite"/>
    </source>
</evidence>
<name>IHFB_STRMK</name>